<evidence type="ECO:0000255" key="1">
    <source>
        <dbReference type="HAMAP-Rule" id="MF_01450"/>
    </source>
</evidence>
<protein>
    <recommendedName>
        <fullName evidence="1">Acylphosphatase</fullName>
        <ecNumber evidence="1">3.6.1.7</ecNumber>
    </recommendedName>
    <alternativeName>
        <fullName evidence="1">Acylphosphate phosphohydrolase</fullName>
    </alternativeName>
</protein>
<accession>Q31YN1</accession>
<name>ACYP_SHIBS</name>
<dbReference type="EC" id="3.6.1.7" evidence="1"/>
<dbReference type="EMBL" id="CP000036">
    <property type="protein sequence ID" value="ABB66827.1"/>
    <property type="molecule type" value="Genomic_DNA"/>
</dbReference>
<dbReference type="RefSeq" id="WP_000034173.1">
    <property type="nucleotide sequence ID" value="NC_007613.1"/>
</dbReference>
<dbReference type="BMRB" id="Q31YN1"/>
<dbReference type="SMR" id="Q31YN1"/>
<dbReference type="KEGG" id="sbo:SBO_2263"/>
<dbReference type="HOGENOM" id="CLU_141932_1_2_6"/>
<dbReference type="Proteomes" id="UP000007067">
    <property type="component" value="Chromosome"/>
</dbReference>
<dbReference type="GO" id="GO:0003998">
    <property type="term" value="F:acylphosphatase activity"/>
    <property type="evidence" value="ECO:0007669"/>
    <property type="project" value="UniProtKB-UniRule"/>
</dbReference>
<dbReference type="FunFam" id="3.30.70.100:FF:000012">
    <property type="entry name" value="Acylphosphatase"/>
    <property type="match status" value="1"/>
</dbReference>
<dbReference type="Gene3D" id="3.30.70.100">
    <property type="match status" value="1"/>
</dbReference>
<dbReference type="HAMAP" id="MF_01450">
    <property type="entry name" value="Acylphosphatase_entero"/>
    <property type="match status" value="1"/>
</dbReference>
<dbReference type="InterPro" id="IPR020456">
    <property type="entry name" value="Acylphosphatase"/>
</dbReference>
<dbReference type="InterPro" id="IPR001792">
    <property type="entry name" value="Acylphosphatase-like_dom"/>
</dbReference>
<dbReference type="InterPro" id="IPR036046">
    <property type="entry name" value="Acylphosphatase-like_dom_sf"/>
</dbReference>
<dbReference type="InterPro" id="IPR028627">
    <property type="entry name" value="Acylphosphatase_bac"/>
</dbReference>
<dbReference type="InterPro" id="IPR017968">
    <property type="entry name" value="Acylphosphatase_CS"/>
</dbReference>
<dbReference type="NCBIfam" id="NF011000">
    <property type="entry name" value="PRK14426.1"/>
    <property type="match status" value="1"/>
</dbReference>
<dbReference type="PANTHER" id="PTHR47268">
    <property type="entry name" value="ACYLPHOSPHATASE"/>
    <property type="match status" value="1"/>
</dbReference>
<dbReference type="PANTHER" id="PTHR47268:SF4">
    <property type="entry name" value="ACYLPHOSPHATASE"/>
    <property type="match status" value="1"/>
</dbReference>
<dbReference type="Pfam" id="PF00708">
    <property type="entry name" value="Acylphosphatase"/>
    <property type="match status" value="1"/>
</dbReference>
<dbReference type="PRINTS" id="PR00112">
    <property type="entry name" value="ACYLPHPHTASE"/>
</dbReference>
<dbReference type="SUPFAM" id="SSF54975">
    <property type="entry name" value="Acylphosphatase/BLUF domain-like"/>
    <property type="match status" value="1"/>
</dbReference>
<dbReference type="PROSITE" id="PS00150">
    <property type="entry name" value="ACYLPHOSPHATASE_1"/>
    <property type="match status" value="1"/>
</dbReference>
<dbReference type="PROSITE" id="PS00151">
    <property type="entry name" value="ACYLPHOSPHATASE_2"/>
    <property type="match status" value="1"/>
</dbReference>
<dbReference type="PROSITE" id="PS51160">
    <property type="entry name" value="ACYLPHOSPHATASE_3"/>
    <property type="match status" value="1"/>
</dbReference>
<sequence>MSKICIIAWIYGRVQGVGFRYTTQYEAKRLGLTGYAKNLDDGSVEVVACGEEGQVEKLMQWLKSGGPRSARVERVLSEPHHPSGELTDFRIR</sequence>
<organism>
    <name type="scientific">Shigella boydii serotype 4 (strain Sb227)</name>
    <dbReference type="NCBI Taxonomy" id="300268"/>
    <lineage>
        <taxon>Bacteria</taxon>
        <taxon>Pseudomonadati</taxon>
        <taxon>Pseudomonadota</taxon>
        <taxon>Gammaproteobacteria</taxon>
        <taxon>Enterobacterales</taxon>
        <taxon>Enterobacteriaceae</taxon>
        <taxon>Shigella</taxon>
    </lineage>
</organism>
<feature type="chain" id="PRO_0000326801" description="Acylphosphatase">
    <location>
        <begin position="1"/>
        <end position="92"/>
    </location>
</feature>
<feature type="domain" description="Acylphosphatase-like" evidence="1">
    <location>
        <begin position="5"/>
        <end position="92"/>
    </location>
</feature>
<feature type="active site" evidence="1">
    <location>
        <position position="20"/>
    </location>
</feature>
<feature type="active site" evidence="1">
    <location>
        <position position="38"/>
    </location>
</feature>
<feature type="disulfide bond" evidence="1">
    <location>
        <begin position="5"/>
        <end position="49"/>
    </location>
</feature>
<gene>
    <name evidence="1" type="primary">yccX</name>
    <name type="ordered locus">SBO_2263</name>
</gene>
<keyword id="KW-1015">Disulfide bond</keyword>
<keyword id="KW-0378">Hydrolase</keyword>
<reference key="1">
    <citation type="journal article" date="2005" name="Nucleic Acids Res.">
        <title>Genome dynamics and diversity of Shigella species, the etiologic agents of bacillary dysentery.</title>
        <authorList>
            <person name="Yang F."/>
            <person name="Yang J."/>
            <person name="Zhang X."/>
            <person name="Chen L."/>
            <person name="Jiang Y."/>
            <person name="Yan Y."/>
            <person name="Tang X."/>
            <person name="Wang J."/>
            <person name="Xiong Z."/>
            <person name="Dong J."/>
            <person name="Xue Y."/>
            <person name="Zhu Y."/>
            <person name="Xu X."/>
            <person name="Sun L."/>
            <person name="Chen S."/>
            <person name="Nie H."/>
            <person name="Peng J."/>
            <person name="Xu J."/>
            <person name="Wang Y."/>
            <person name="Yuan Z."/>
            <person name="Wen Y."/>
            <person name="Yao Z."/>
            <person name="Shen Y."/>
            <person name="Qiang B."/>
            <person name="Hou Y."/>
            <person name="Yu J."/>
            <person name="Jin Q."/>
        </authorList>
    </citation>
    <scope>NUCLEOTIDE SEQUENCE [LARGE SCALE GENOMIC DNA]</scope>
    <source>
        <strain>Sb227</strain>
    </source>
</reference>
<proteinExistence type="inferred from homology"/>
<comment type="catalytic activity">
    <reaction evidence="1">
        <text>an acyl phosphate + H2O = a carboxylate + phosphate + H(+)</text>
        <dbReference type="Rhea" id="RHEA:14965"/>
        <dbReference type="ChEBI" id="CHEBI:15377"/>
        <dbReference type="ChEBI" id="CHEBI:15378"/>
        <dbReference type="ChEBI" id="CHEBI:29067"/>
        <dbReference type="ChEBI" id="CHEBI:43474"/>
        <dbReference type="ChEBI" id="CHEBI:59918"/>
        <dbReference type="EC" id="3.6.1.7"/>
    </reaction>
</comment>
<comment type="similarity">
    <text evidence="1">Belongs to the acylphosphatase family.</text>
</comment>